<sequence length="461" mass="50345">METLFNGTLALAGRDQETTGFAWWAGNARLINLSGKLLGAHVAHAGLIVFWAGAMNLFEVAHFVPEKPMYEQGLILLPHLATLGWGVGPGGEVIDTFPYFVSGVLHLISSAVLGFGGIYHALLGPETLEESFPFFGYVWKDRNKMTTILGIHLILLGLGAFLLVFKALYFGGVYDTWAPGGGDVRKITNLTLSPSIIFGYLLKSPFGGEGWIVSVDDLEDIIGGHVWLGSICILGGIWHILTKPFAWARRALVWSGEAYLSYSLGALSVFGFIACCFVWFNNTAYPSEFYGPTGPEASQAQAFTFLVRDQRLGANVGSAQGPTGLGKYLMRSPTGEVIFGGETMRFWDLRAPWLEPLRGPNGLDLSRLKKDIQPWQERRSAEYMTHAPLGSLNSVGGVATEINAVNYVSPRSWLATSHFVLGFFFFVGHLWHAGRARAAAAGFEKGIDRDFEPVLSMTPLN</sequence>
<dbReference type="EMBL" id="AB237912">
    <property type="protein sequence ID" value="BAE46644.1"/>
    <property type="molecule type" value="Genomic_DNA"/>
</dbReference>
<dbReference type="RefSeq" id="YP_358669.1">
    <property type="nucleotide sequence ID" value="NC_007500.1"/>
</dbReference>
<dbReference type="SMR" id="Q3C1I3"/>
<dbReference type="GeneID" id="3735103"/>
<dbReference type="KEGG" id="nsy:3735103"/>
<dbReference type="OrthoDB" id="28657at4085"/>
<dbReference type="Proteomes" id="UP000189701">
    <property type="component" value="Chloroplast Pltd"/>
</dbReference>
<dbReference type="GO" id="GO:0009535">
    <property type="term" value="C:chloroplast thylakoid membrane"/>
    <property type="evidence" value="ECO:0007669"/>
    <property type="project" value="UniProtKB-SubCell"/>
</dbReference>
<dbReference type="GO" id="GO:0009523">
    <property type="term" value="C:photosystem II"/>
    <property type="evidence" value="ECO:0007669"/>
    <property type="project" value="UniProtKB-KW"/>
</dbReference>
<dbReference type="GO" id="GO:0016168">
    <property type="term" value="F:chlorophyll binding"/>
    <property type="evidence" value="ECO:0007669"/>
    <property type="project" value="UniProtKB-UniRule"/>
</dbReference>
<dbReference type="GO" id="GO:0045156">
    <property type="term" value="F:electron transporter, transferring electrons within the cyclic electron transport pathway of photosynthesis activity"/>
    <property type="evidence" value="ECO:0007669"/>
    <property type="project" value="InterPro"/>
</dbReference>
<dbReference type="GO" id="GO:0046872">
    <property type="term" value="F:metal ion binding"/>
    <property type="evidence" value="ECO:0007669"/>
    <property type="project" value="UniProtKB-KW"/>
</dbReference>
<dbReference type="GO" id="GO:0009772">
    <property type="term" value="P:photosynthetic electron transport in photosystem II"/>
    <property type="evidence" value="ECO:0007669"/>
    <property type="project" value="InterPro"/>
</dbReference>
<dbReference type="FunFam" id="1.10.10.670:FF:000001">
    <property type="entry name" value="Photosystem II CP43 reaction center protein"/>
    <property type="match status" value="1"/>
</dbReference>
<dbReference type="Gene3D" id="1.10.10.670">
    <property type="entry name" value="photosystem ii from thermosynechococcus elongatus"/>
    <property type="match status" value="1"/>
</dbReference>
<dbReference type="HAMAP" id="MF_01496">
    <property type="entry name" value="PSII_PsbC_CP43"/>
    <property type="match status" value="1"/>
</dbReference>
<dbReference type="InterPro" id="IPR000932">
    <property type="entry name" value="PS_antenna-like"/>
</dbReference>
<dbReference type="InterPro" id="IPR036001">
    <property type="entry name" value="PS_II_antenna-like_sf"/>
</dbReference>
<dbReference type="InterPro" id="IPR005869">
    <property type="entry name" value="PSII_PsbC"/>
</dbReference>
<dbReference type="InterPro" id="IPR044900">
    <property type="entry name" value="PSII_PsbC_sf"/>
</dbReference>
<dbReference type="NCBIfam" id="TIGR01153">
    <property type="entry name" value="psbC"/>
    <property type="match status" value="1"/>
</dbReference>
<dbReference type="Pfam" id="PF00421">
    <property type="entry name" value="PSII"/>
    <property type="match status" value="1"/>
</dbReference>
<dbReference type="SUPFAM" id="SSF161077">
    <property type="entry name" value="Photosystem II antenna protein-like"/>
    <property type="match status" value="1"/>
</dbReference>
<name>PSBC_NICSY</name>
<comment type="function">
    <text evidence="1">One of the components of the core complex of photosystem II (PSII). It binds chlorophyll and helps catalyze the primary light-induced photochemical processes of PSII. PSII is a light-driven water:plastoquinone oxidoreductase, using light energy to abstract electrons from H(2)O, generating O(2) and a proton gradient subsequently used for ATP formation.</text>
</comment>
<comment type="cofactor">
    <text evidence="1">Binds multiple chlorophylls and provides some of the ligands for the Ca-4Mn-5O cluster of the oxygen-evolving complex. It may also provide a ligand for a Cl- that is required for oxygen evolution. PSII binds additional chlorophylls, carotenoids and specific lipids.</text>
</comment>
<comment type="subunit">
    <text evidence="1">PSII is composed of 1 copy each of membrane proteins PsbA, PsbB, PsbC, PsbD, PsbE, PsbF, PsbH, PsbI, PsbJ, PsbK, PsbL, PsbM, PsbT, PsbX, PsbY, PsbZ, Psb30/Ycf12, at least 3 peripheral proteins of the oxygen-evolving complex and a large number of cofactors. It forms dimeric complexes.</text>
</comment>
<comment type="subcellular location">
    <subcellularLocation>
        <location evidence="1">Plastid</location>
        <location evidence="1">Chloroplast thylakoid membrane</location>
        <topology evidence="1">Multi-pass membrane protein</topology>
    </subcellularLocation>
</comment>
<comment type="similarity">
    <text evidence="1">Belongs to the PsbB/PsbC family. PsbC subfamily.</text>
</comment>
<protein>
    <recommendedName>
        <fullName evidence="1">Photosystem II CP43 reaction center protein</fullName>
    </recommendedName>
    <alternativeName>
        <fullName evidence="1">PSII 43 kDa protein</fullName>
    </alternativeName>
    <alternativeName>
        <fullName evidence="1">Protein CP-43</fullName>
    </alternativeName>
</protein>
<feature type="propeptide" id="PRO_0000431171" evidence="1">
    <location>
        <begin position="1"/>
        <end position="2"/>
    </location>
</feature>
<feature type="chain" id="PRO_0000361431" description="Photosystem II CP43 reaction center protein" evidence="1">
    <location>
        <begin position="3"/>
        <end position="461"/>
    </location>
</feature>
<feature type="transmembrane region" description="Helical" evidence="1">
    <location>
        <begin position="57"/>
        <end position="81"/>
    </location>
</feature>
<feature type="transmembrane region" description="Helical" evidence="1">
    <location>
        <begin position="122"/>
        <end position="143"/>
    </location>
</feature>
<feature type="transmembrane region" description="Helical" evidence="1">
    <location>
        <begin position="166"/>
        <end position="188"/>
    </location>
</feature>
<feature type="transmembrane region" description="Helical" evidence="1">
    <location>
        <begin position="243"/>
        <end position="263"/>
    </location>
</feature>
<feature type="transmembrane region" description="Helical" evidence="1">
    <location>
        <begin position="279"/>
        <end position="300"/>
    </location>
</feature>
<feature type="transmembrane region" description="Helical" evidence="1">
    <location>
        <begin position="435"/>
        <end position="459"/>
    </location>
</feature>
<feature type="binding site" evidence="1">
    <location>
        <position position="355"/>
    </location>
    <ligand>
        <name>[CaMn4O5] cluster</name>
        <dbReference type="ChEBI" id="CHEBI:189552"/>
    </ligand>
</feature>
<feature type="modified residue" description="N-acetylthreonine" evidence="1">
    <location>
        <position position="3"/>
    </location>
</feature>
<feature type="modified residue" description="Phosphothreonine" evidence="1">
    <location>
        <position position="3"/>
    </location>
</feature>
<reference key="1">
    <citation type="journal article" date="2006" name="Mol. Genet. Genomics">
        <title>The chloroplast genome of Nicotiana sylvestris and Nicotiana tomentosiformis: complete sequencing confirms that the Nicotiana sylvestris progenitor is the maternal genome donor of Nicotiana tabacum.</title>
        <authorList>
            <person name="Yukawa M."/>
            <person name="Tsudzuki T."/>
            <person name="Sugiura M."/>
        </authorList>
    </citation>
    <scope>NUCLEOTIDE SEQUENCE [LARGE SCALE GENOMIC DNA]</scope>
</reference>
<organism>
    <name type="scientific">Nicotiana sylvestris</name>
    <name type="common">Wood tobacco</name>
    <name type="synonym">South American tobacco</name>
    <dbReference type="NCBI Taxonomy" id="4096"/>
    <lineage>
        <taxon>Eukaryota</taxon>
        <taxon>Viridiplantae</taxon>
        <taxon>Streptophyta</taxon>
        <taxon>Embryophyta</taxon>
        <taxon>Tracheophyta</taxon>
        <taxon>Spermatophyta</taxon>
        <taxon>Magnoliopsida</taxon>
        <taxon>eudicotyledons</taxon>
        <taxon>Gunneridae</taxon>
        <taxon>Pentapetalae</taxon>
        <taxon>asterids</taxon>
        <taxon>lamiids</taxon>
        <taxon>Solanales</taxon>
        <taxon>Solanaceae</taxon>
        <taxon>Nicotianoideae</taxon>
        <taxon>Nicotianeae</taxon>
        <taxon>Nicotiana</taxon>
    </lineage>
</organism>
<gene>
    <name evidence="1" type="primary">psbC</name>
</gene>
<keyword id="KW-0007">Acetylation</keyword>
<keyword id="KW-0148">Chlorophyll</keyword>
<keyword id="KW-0150">Chloroplast</keyword>
<keyword id="KW-0157">Chromophore</keyword>
<keyword id="KW-0464">Manganese</keyword>
<keyword id="KW-0472">Membrane</keyword>
<keyword id="KW-0479">Metal-binding</keyword>
<keyword id="KW-0597">Phosphoprotein</keyword>
<keyword id="KW-0602">Photosynthesis</keyword>
<keyword id="KW-0604">Photosystem II</keyword>
<keyword id="KW-0934">Plastid</keyword>
<keyword id="KW-1185">Reference proteome</keyword>
<keyword id="KW-0793">Thylakoid</keyword>
<keyword id="KW-0812">Transmembrane</keyword>
<keyword id="KW-1133">Transmembrane helix</keyword>
<proteinExistence type="inferred from homology"/>
<geneLocation type="chloroplast"/>
<accession>Q3C1I3</accession>
<evidence type="ECO:0000255" key="1">
    <source>
        <dbReference type="HAMAP-Rule" id="MF_01496"/>
    </source>
</evidence>